<gene>
    <name type="ordered locus">rrnAC0857</name>
</gene>
<accession>Q5V3R4</accession>
<proteinExistence type="inferred from homology"/>
<protein>
    <recommendedName>
        <fullName evidence="1">tRNA (cytidine(56)-2'-O)-methyltransferase</fullName>
        <ecNumber evidence="1">2.1.1.206</ecNumber>
    </recommendedName>
    <alternativeName>
        <fullName evidence="1">tRNA ribose 2'-O-methyltransferase aTrm56</fullName>
    </alternativeName>
</protein>
<reference key="1">
    <citation type="journal article" date="2004" name="Genome Res.">
        <title>Genome sequence of Haloarcula marismortui: a halophilic archaeon from the Dead Sea.</title>
        <authorList>
            <person name="Baliga N.S."/>
            <person name="Bonneau R."/>
            <person name="Facciotti M.T."/>
            <person name="Pan M."/>
            <person name="Glusman G."/>
            <person name="Deutsch E.W."/>
            <person name="Shannon P."/>
            <person name="Chiu Y."/>
            <person name="Weng R.S."/>
            <person name="Gan R.R."/>
            <person name="Hung P."/>
            <person name="Date S.V."/>
            <person name="Marcotte E."/>
            <person name="Hood L."/>
            <person name="Ng W.V."/>
        </authorList>
    </citation>
    <scope>NUCLEOTIDE SEQUENCE [LARGE SCALE GENOMIC DNA]</scope>
    <source>
        <strain>ATCC 43049 / DSM 3752 / JCM 8966 / VKM B-1809</strain>
    </source>
</reference>
<organism>
    <name type="scientific">Haloarcula marismortui (strain ATCC 43049 / DSM 3752 / JCM 8966 / VKM B-1809)</name>
    <name type="common">Halobacterium marismortui</name>
    <dbReference type="NCBI Taxonomy" id="272569"/>
    <lineage>
        <taxon>Archaea</taxon>
        <taxon>Methanobacteriati</taxon>
        <taxon>Methanobacteriota</taxon>
        <taxon>Stenosarchaea group</taxon>
        <taxon>Halobacteria</taxon>
        <taxon>Halobacteriales</taxon>
        <taxon>Haloarculaceae</taxon>
        <taxon>Haloarcula</taxon>
    </lineage>
</organism>
<sequence length="180" mass="20120">MKDSPQVTVLRLGHRPGRDERMTTHVGLTARALGADKVVLANAARNQADTVIDITDRFGGPFDVASTEEPKRLIRDFEGRVVHLTMYGEPVQEVEADVREANTAEPLLVVVGAEKVPFEVYEHADWNVGVTNQPHSEVASLAVFLDRLFEGRELDREWENPDRVVVPQETGKRVVDPDEE</sequence>
<comment type="function">
    <text evidence="1">Specifically catalyzes the AdoMet-dependent 2'-O-ribose methylation of cytidine at position 56 in tRNAs.</text>
</comment>
<comment type="catalytic activity">
    <reaction evidence="1">
        <text>cytidine(56) in tRNA + S-adenosyl-L-methionine = 2'-O-methylcytidine(56) in tRNA + S-adenosyl-L-homocysteine + H(+)</text>
        <dbReference type="Rhea" id="RHEA:42968"/>
        <dbReference type="Rhea" id="RHEA-COMP:10308"/>
        <dbReference type="Rhea" id="RHEA-COMP:10309"/>
        <dbReference type="ChEBI" id="CHEBI:15378"/>
        <dbReference type="ChEBI" id="CHEBI:57856"/>
        <dbReference type="ChEBI" id="CHEBI:59789"/>
        <dbReference type="ChEBI" id="CHEBI:74495"/>
        <dbReference type="ChEBI" id="CHEBI:82748"/>
        <dbReference type="EC" id="2.1.1.206"/>
    </reaction>
</comment>
<comment type="subunit">
    <text evidence="1">Homodimer.</text>
</comment>
<comment type="subcellular location">
    <subcellularLocation>
        <location evidence="1">Cytoplasm</location>
    </subcellularLocation>
</comment>
<comment type="similarity">
    <text evidence="1">Belongs to the aTrm56 family.</text>
</comment>
<name>TRM56_HALMA</name>
<evidence type="ECO:0000255" key="1">
    <source>
        <dbReference type="HAMAP-Rule" id="MF_00077"/>
    </source>
</evidence>
<dbReference type="EC" id="2.1.1.206" evidence="1"/>
<dbReference type="EMBL" id="AY596297">
    <property type="protein sequence ID" value="AAV45838.1"/>
    <property type="molecule type" value="Genomic_DNA"/>
</dbReference>
<dbReference type="RefSeq" id="WP_011223279.1">
    <property type="nucleotide sequence ID" value="NC_006396.1"/>
</dbReference>
<dbReference type="SMR" id="Q5V3R4"/>
<dbReference type="STRING" id="272569.rrnAC0857"/>
<dbReference type="PaxDb" id="272569-rrnAC0857"/>
<dbReference type="EnsemblBacteria" id="AAV45838">
    <property type="protein sequence ID" value="AAV45838"/>
    <property type="gene ID" value="rrnAC0857"/>
</dbReference>
<dbReference type="GeneID" id="40151882"/>
<dbReference type="KEGG" id="hma:rrnAC0857"/>
<dbReference type="PATRIC" id="fig|272569.17.peg.1596"/>
<dbReference type="eggNOG" id="arCOG01857">
    <property type="taxonomic scope" value="Archaea"/>
</dbReference>
<dbReference type="HOGENOM" id="CLU_123709_0_0_2"/>
<dbReference type="Proteomes" id="UP000001169">
    <property type="component" value="Chromosome I"/>
</dbReference>
<dbReference type="GO" id="GO:0005737">
    <property type="term" value="C:cytoplasm"/>
    <property type="evidence" value="ECO:0007669"/>
    <property type="project" value="UniProtKB-SubCell"/>
</dbReference>
<dbReference type="GO" id="GO:0106059">
    <property type="term" value="F:tRNA (cytidine(56)-2'-O)-methyltransferase activity"/>
    <property type="evidence" value="ECO:0007669"/>
    <property type="project" value="UniProtKB-EC"/>
</dbReference>
<dbReference type="GO" id="GO:0002128">
    <property type="term" value="P:tRNA nucleoside ribose methylation"/>
    <property type="evidence" value="ECO:0007669"/>
    <property type="project" value="UniProtKB-UniRule"/>
</dbReference>
<dbReference type="CDD" id="cd18083">
    <property type="entry name" value="aTrm56-like"/>
    <property type="match status" value="1"/>
</dbReference>
<dbReference type="Gene3D" id="3.40.1280.10">
    <property type="match status" value="1"/>
</dbReference>
<dbReference type="HAMAP" id="MF_00077">
    <property type="entry name" value="tRNA_methyltr_aTrm56"/>
    <property type="match status" value="1"/>
</dbReference>
<dbReference type="InterPro" id="IPR029028">
    <property type="entry name" value="Alpha/beta_knot_MTases"/>
</dbReference>
<dbReference type="InterPro" id="IPR029026">
    <property type="entry name" value="tRNA_m1G_MTases_N"/>
</dbReference>
<dbReference type="InterPro" id="IPR002845">
    <property type="entry name" value="tRNA_mtfrase_aTrm56"/>
</dbReference>
<dbReference type="NCBIfam" id="NF003048">
    <property type="entry name" value="PRK03958.1"/>
    <property type="match status" value="1"/>
</dbReference>
<dbReference type="PANTHER" id="PTHR42197">
    <property type="entry name" value="TRNA (CYTIDINE(56)-2'-O)-METHYLTRANSFERASE"/>
    <property type="match status" value="1"/>
</dbReference>
<dbReference type="PANTHER" id="PTHR42197:SF1">
    <property type="entry name" value="TRNA (CYTIDINE(56)-2'-O)-METHYLTRANSFERASE"/>
    <property type="match status" value="1"/>
</dbReference>
<dbReference type="Pfam" id="PF01994">
    <property type="entry name" value="Trm56"/>
    <property type="match status" value="1"/>
</dbReference>
<dbReference type="PIRSF" id="PIRSF016123">
    <property type="entry name" value="UCP016123"/>
    <property type="match status" value="1"/>
</dbReference>
<dbReference type="SUPFAM" id="SSF75217">
    <property type="entry name" value="alpha/beta knot"/>
    <property type="match status" value="1"/>
</dbReference>
<keyword id="KW-0963">Cytoplasm</keyword>
<keyword id="KW-0489">Methyltransferase</keyword>
<keyword id="KW-1185">Reference proteome</keyword>
<keyword id="KW-0949">S-adenosyl-L-methionine</keyword>
<keyword id="KW-0808">Transferase</keyword>
<keyword id="KW-0819">tRNA processing</keyword>
<feature type="chain" id="PRO_0000365298" description="tRNA (cytidine(56)-2'-O)-methyltransferase">
    <location>
        <begin position="1"/>
        <end position="180"/>
    </location>
</feature>
<feature type="binding site" evidence="1">
    <location>
        <position position="84"/>
    </location>
    <ligand>
        <name>S-adenosyl-L-methionine</name>
        <dbReference type="ChEBI" id="CHEBI:59789"/>
    </ligand>
</feature>
<feature type="binding site" evidence="1">
    <location>
        <begin position="112"/>
        <end position="116"/>
    </location>
    <ligand>
        <name>S-adenosyl-L-methionine</name>
        <dbReference type="ChEBI" id="CHEBI:59789"/>
    </ligand>
</feature>